<name>DEPOL_BPKNT</name>
<feature type="chain" id="PRO_0000458727" description="Depolymerase, capsule K1-specific">
    <location>
        <begin position="1"/>
        <end position="651"/>
    </location>
</feature>
<feature type="region of interest" description="Interaction with the host capsular trisaccharides" evidence="2">
    <location>
        <begin position="71"/>
        <end position="559"/>
    </location>
</feature>
<feature type="binding site" evidence="2">
    <location>
        <position position="130"/>
    </location>
    <ligand>
        <name>substrate</name>
    </ligand>
</feature>
<feature type="binding site" evidence="2">
    <location>
        <position position="177"/>
    </location>
    <ligand>
        <name>substrate</name>
    </ligand>
</feature>
<feature type="binding site" evidence="2">
    <location>
        <position position="217"/>
    </location>
    <ligand>
        <name>substrate</name>
    </ligand>
</feature>
<feature type="binding site" evidence="2">
    <location>
        <position position="291"/>
    </location>
    <ligand>
        <name>substrate</name>
    </ligand>
</feature>
<feature type="binding site" evidence="2">
    <location>
        <position position="314"/>
    </location>
    <ligand>
        <name>substrate</name>
    </ligand>
</feature>
<feature type="binding site" evidence="2">
    <location>
        <position position="339"/>
    </location>
    <ligand>
        <name>substrate</name>
    </ligand>
</feature>
<feature type="binding site" evidence="2">
    <location>
        <position position="340"/>
    </location>
    <ligand>
        <name>substrate</name>
    </ligand>
</feature>
<feature type="binding site" evidence="2">
    <location>
        <position position="378"/>
    </location>
    <ligand>
        <name>substrate</name>
    </ligand>
</feature>
<feature type="site" description="Important for catalysis" evidence="2">
    <location>
        <position position="311"/>
    </location>
</feature>
<feature type="site" description="Important for catalysis" evidence="2">
    <location>
        <position position="373"/>
    </location>
</feature>
<feature type="site" description="Important for catalysis" evidence="2">
    <location>
        <position position="397"/>
    </location>
</feature>
<feature type="site" description="Important for the adsorption and infectivity of phage" evidence="2">
    <location>
        <position position="472"/>
    </location>
</feature>
<feature type="mutagenesis site" description="Almost complete loss of enzymatic activity." evidence="2">
    <original>K</original>
    <variation>A</variation>
    <location>
        <position position="291"/>
    </location>
</feature>
<feature type="mutagenesis site" description="Almost complete loss of enzymatic activity." evidence="2">
    <original>Y</original>
    <variation>A</variation>
    <location>
        <position position="311"/>
    </location>
</feature>
<feature type="mutagenesis site" description="50% loss of enzymatic activity." evidence="2">
    <original>E</original>
    <variation>A</variation>
    <location>
        <position position="314"/>
    </location>
</feature>
<feature type="mutagenesis site" description="Almost complete loss of enzymatic activity." evidence="2">
    <original>R</original>
    <variation>A</variation>
    <location>
        <position position="333"/>
    </location>
</feature>
<feature type="mutagenesis site" description="Almost complete loss of enzymatic activity." evidence="2">
    <original>H</original>
    <variation>A</variation>
    <location>
        <position position="334"/>
    </location>
</feature>
<feature type="mutagenesis site" description="Complete loss of enzymatic activity." evidence="2">
    <original>H</original>
    <variation>A</variation>
    <location>
        <position position="373"/>
    </location>
</feature>
<feature type="mutagenesis site" description="Almost no effect on enzymatic activity." evidence="2">
    <original>R</original>
    <variation>A</variation>
    <location>
        <position position="378"/>
    </location>
</feature>
<feature type="mutagenesis site" description="Almost complete loss of enzymatic activity." evidence="2">
    <original>R</original>
    <variation>A</variation>
    <location>
        <position position="397"/>
    </location>
</feature>
<feature type="mutagenesis site" description="70% loss of enzymatic activity and 20% loss of adsorption efficiency." evidence="2">
    <original>R</original>
    <variation>A</variation>
    <location>
        <position position="472"/>
    </location>
</feature>
<gene>
    <name evidence="3" type="ORF">ORF34</name>
</gene>
<dbReference type="EC" id="4.-.-.-" evidence="1 2"/>
<dbReference type="EMBL" id="AB716666">
    <property type="protein sequence ID" value="BAP15746.1"/>
    <property type="molecule type" value="Genomic_DNA"/>
</dbReference>
<dbReference type="RefSeq" id="YP_009098385.1">
    <property type="nucleotide sequence ID" value="NC_025418.1"/>
</dbReference>
<dbReference type="PDB" id="7W1C">
    <property type="method" value="X-ray"/>
    <property type="resolution" value="1.48 A"/>
    <property type="chains" value="A/B/C/D/E/F=1-651"/>
</dbReference>
<dbReference type="PDB" id="7W1D">
    <property type="method" value="X-ray"/>
    <property type="resolution" value="2.78 A"/>
    <property type="chains" value="A/B/C/D/E/F/G/H/I/J/K/L=1-651"/>
</dbReference>
<dbReference type="PDB" id="7W1E">
    <property type="method" value="X-ray"/>
    <property type="resolution" value="1.46 A"/>
    <property type="chains" value="A/B/C/D/E/F=1-651"/>
</dbReference>
<dbReference type="PDBsum" id="7W1C"/>
<dbReference type="PDBsum" id="7W1D"/>
<dbReference type="PDBsum" id="7W1E"/>
<dbReference type="SMR" id="A0A068Q5Q5"/>
<dbReference type="KEGG" id="vg:22276649"/>
<dbReference type="OrthoDB" id="711at10239"/>
<dbReference type="Proteomes" id="UP000027480">
    <property type="component" value="Genome"/>
</dbReference>
<dbReference type="GO" id="GO:0098015">
    <property type="term" value="C:virus tail"/>
    <property type="evidence" value="ECO:0007669"/>
    <property type="project" value="UniProtKB-KW"/>
</dbReference>
<dbReference type="GO" id="GO:0016829">
    <property type="term" value="F:lyase activity"/>
    <property type="evidence" value="ECO:0007669"/>
    <property type="project" value="UniProtKB-KW"/>
</dbReference>
<dbReference type="GO" id="GO:0098671">
    <property type="term" value="P:adhesion receptor-mediated virion attachment to host cell"/>
    <property type="evidence" value="ECO:0007669"/>
    <property type="project" value="UniProtKB-KW"/>
</dbReference>
<dbReference type="GO" id="GO:0098994">
    <property type="term" value="P:symbiont entry into host cell via disruption of host cell envelope"/>
    <property type="evidence" value="ECO:0007669"/>
    <property type="project" value="UniProtKB-KW"/>
</dbReference>
<dbReference type="GO" id="GO:0098996">
    <property type="term" value="P:symbiont entry into host cell via disruption of host cell glycocalyx"/>
    <property type="evidence" value="ECO:0007669"/>
    <property type="project" value="UniProtKB-KW"/>
</dbReference>
<dbReference type="Gene3D" id="2.160.20.10">
    <property type="entry name" value="Single-stranded right-handed beta-helix, Pectin lyase-like"/>
    <property type="match status" value="1"/>
</dbReference>
<dbReference type="InterPro" id="IPR056204">
    <property type="entry name" value="K1-lyase_C"/>
</dbReference>
<dbReference type="InterPro" id="IPR012334">
    <property type="entry name" value="Pectin_lyas_fold"/>
</dbReference>
<dbReference type="InterPro" id="IPR011050">
    <property type="entry name" value="Pectin_lyase_fold/virulence"/>
</dbReference>
<dbReference type="Pfam" id="PF24146">
    <property type="entry name" value="K1-lyase_C"/>
    <property type="match status" value="1"/>
</dbReference>
<dbReference type="Pfam" id="PF24145">
    <property type="entry name" value="K1-lyase_N"/>
    <property type="match status" value="1"/>
</dbReference>
<dbReference type="Pfam" id="PF24149">
    <property type="entry name" value="K1-lyase_Rider"/>
    <property type="match status" value="1"/>
</dbReference>
<dbReference type="SUPFAM" id="SSF51126">
    <property type="entry name" value="Pectin lyase-like"/>
    <property type="match status" value="1"/>
</dbReference>
<sequence length="651" mass="69928">MALIRLVAPERVFSDLASMVAYPNFQVQDKITLLGSAGGDFTFTTTASVVDNGTVFAVPGGYLLRKFVGPAYSSWFSNWTGIVTFMSAPNRHLVVDTVLQATSVLNIKSNSTLEFTDTGRILPDAAVARQVLNITGSAPSVFVPLAADAAAGSKVITVAAGALSAVKGTYLYLRSNKLCDGGPNTYGVKISQIRKVVGVSTSGGVTSIRLDKALHYNYYLSDAAEVGIPTMVENVTLVSPYINEFGYDDLNRFFTSGISANFAADLHIQDGVIIGNKRPGASDIEGRSAIKFNNCVDSTVKGTCFYNIGWYGVEVLGCSEDTEVHDIHAMDVRHAISLNWQSTADGDKWGEPIEFLGVNCEAYSTTQAGFDTHDIGKRVKFVRCVSYDSADDGFQARTNGVEYLNCRAYRAAMDGFASNTGVAFPIYRECLAYDNVRSGFNCSYGGGYVYDCEAHGSQNGVRINGGRVKGGRYTRNSSSHIFVTKDVAETAQTSLEIDGVSMRYDGTGRAVYFHGTVGIDPTLVSMSNNDMTGHGLFWALLSGYTVQPTPPRMSRNLLDDTGIRGVATLVAGEATVNARVRGNFGSVANSFKWVSEVKLTRLTFPSSAGALTVTSVAQNQDVPTPNPDLNSFVIRSSNAADVSQVAWEVYL</sequence>
<protein>
    <recommendedName>
        <fullName evidence="4">Depolymerase, capsule K1-specific</fullName>
        <ecNumber evidence="1 2">4.-.-.-</ecNumber>
    </recommendedName>
    <alternativeName>
        <fullName evidence="4">Gene product 34</fullName>
        <shortName evidence="4">gp34</shortName>
    </alternativeName>
    <alternativeName>
        <fullName evidence="3">K1-ORF34 protein</fullName>
    </alternativeName>
    <alternativeName>
        <fullName evidence="4">Probable tail spike protein</fullName>
    </alternativeName>
</protein>
<organismHost>
    <name type="scientific">Klebsiella pneumoniae</name>
    <dbReference type="NCBI Taxonomy" id="573"/>
</organismHost>
<keyword id="KW-0002">3D-structure</keyword>
<keyword id="KW-1238">Degradation of host capsule during virus entry</keyword>
<keyword id="KW-1235">Degradation of host cell envelope components during virus entry</keyword>
<keyword id="KW-0945">Host-virus interaction</keyword>
<keyword id="KW-0456">Lyase</keyword>
<keyword id="KW-1185">Reference proteome</keyword>
<keyword id="KW-1233">Viral attachment to host adhesion receptor</keyword>
<keyword id="KW-1161">Viral attachment to host cell</keyword>
<keyword id="KW-1227">Viral tail protein</keyword>
<keyword id="KW-0946">Virion</keyword>
<keyword id="KW-1160">Virus entry into host cell</keyword>
<accession>A0A068Q5Q5</accession>
<proteinExistence type="evidence at protein level"/>
<reference key="1">
    <citation type="submission" date="2012-05" db="EMBL/GenBank/DDBJ databases">
        <title>Development of a bacteriophage/glycosidase system for capsular typing of Klebsiella pneumoniae.</title>
        <authorList>
            <person name="Lin T."/>
            <person name="Pan Y."/>
            <person name="Hsieh P."/>
            <person name="Wu M."/>
            <person name="Hsu C."/>
            <person name="Wang J."/>
        </authorList>
    </citation>
    <scope>NUCLEOTIDE SEQUENCE [LARGE SCALE GENOMIC DNA]</scope>
</reference>
<reference key="2">
    <citation type="journal article" date="2014" name="J. Infect. Dis.">
        <title>Isolation of a bacteriophage and its depolymerase specific for K1 capsule of Klebsiella pneumoniae: implication in typing and treatment.</title>
        <authorList>
            <person name="Lin T.L."/>
            <person name="Hsieh P.F."/>
            <person name="Huang Y.T."/>
            <person name="Lee W.C."/>
            <person name="Tsai Y.T."/>
            <person name="Su P.A."/>
            <person name="Pan Y.J."/>
            <person name="Hsu C.R."/>
            <person name="Wu M.C."/>
            <person name="Wang J.T."/>
        </authorList>
    </citation>
    <scope>FUNCTION</scope>
    <scope>CATALYTIC ACTIVITY</scope>
</reference>
<reference key="3">
    <citation type="journal article" date="2019" name="Front. Microbiol.">
        <title>Modeling the Architecture of Depolymerase-Containing Receptor Binding Proteins in Klebsiella Phages.</title>
        <authorList>
            <person name="Latka A."/>
            <person name="Leiman P.G."/>
            <person name="Drulis-Kawa Z."/>
            <person name="Briers Y."/>
        </authorList>
    </citation>
    <scope>REVIEW</scope>
</reference>
<reference evidence="5 6 7" key="4">
    <citation type="journal article" date="2022" name="J. Biomed. Sci.">
        <title>Structural and biological insights into Klebsiella pneumoniae surface polysaccharide degradation by a bacteriophage K1 lyase: implications for clinical use.</title>
        <authorList>
            <person name="Tu I.F."/>
            <person name="Lin T.L."/>
            <person name="Yang F.L."/>
            <person name="Lee I.M."/>
            <person name="Tu W.L."/>
            <person name="Liao J.H."/>
            <person name="Ko T.P."/>
            <person name="Wu W.J."/>
            <person name="Jan J.T."/>
            <person name="Ho M.R."/>
            <person name="Chou C.Y."/>
            <person name="Wang A.H."/>
            <person name="Wu C.Y."/>
            <person name="Wang J.T."/>
            <person name="Huang K.F."/>
            <person name="Wu S.H."/>
        </authorList>
    </citation>
    <scope>X-RAY CRYSTALLOGRAPHY (1.46 ANGSTROMS) IN COMPLEX WITH 3-O-ACETYL-6-DEOXY-ALPHA-L-GALACTOPYRANOSE-(1-3)-BETA-D-GLUCOPYRANOSE</scope>
    <scope>SUBUNIT</scope>
    <scope>CATALYTIC ACTIVITY</scope>
    <scope>BIOPHYSICOCHEMICAL PROPERTIES</scope>
    <scope>DOMAIN</scope>
    <scope>MUTAGENESIS OF LYS-291; TYR-311; GLU-314; ARG-333; HIS-334; HIS-373; ARG-378; ARG-397 AND ARG-472</scope>
</reference>
<comment type="function">
    <text evidence="1 2">Functions as a receptor binding protein (RBP) and mediates the attachment to the host capsular exopolysaccharides (PubMed:35130876). Displays a lyase activity that specifically degrades the K1-type polysaccharides of Klebsiella pneumoniae capsule (PubMed:25001459, PubMed:35130876).</text>
</comment>
<comment type="subunit">
    <text evidence="2">Homotrimer.</text>
</comment>
<comment type="subcellular location">
    <subcellularLocation>
        <location evidence="4">Virion</location>
    </subcellularLocation>
    <text evidence="4">Tail appendage.</text>
</comment>
<comment type="similarity">
    <text evidence="4">Belongs to the K1-specific depolymerase family.</text>
</comment>
<organism>
    <name type="scientific">Klebsiella phage NTUH-K2044-K1-1</name>
    <name type="common">Bacteriophage NTUH-K2044-K1-1</name>
    <dbReference type="NCBI Taxonomy" id="1194091"/>
    <lineage>
        <taxon>Viruses</taxon>
        <taxon>Duplodnaviria</taxon>
        <taxon>Heunggongvirae</taxon>
        <taxon>Uroviricota</taxon>
        <taxon>Caudoviricetes</taxon>
        <taxon>Autographiviridae</taxon>
        <taxon>Slopekvirinae</taxon>
        <taxon>Drulisvirus</taxon>
        <taxon>Drulisvirus K244</taxon>
    </lineage>
</organism>
<evidence type="ECO:0000269" key="1">
    <source>
    </source>
</evidence>
<evidence type="ECO:0000269" key="2">
    <source>
    </source>
</evidence>
<evidence type="ECO:0000303" key="3">
    <source>
    </source>
</evidence>
<evidence type="ECO:0000305" key="4"/>
<evidence type="ECO:0007744" key="5">
    <source>
        <dbReference type="PDB" id="7W1C"/>
    </source>
</evidence>
<evidence type="ECO:0007744" key="6">
    <source>
        <dbReference type="PDB" id="7W1D"/>
    </source>
</evidence>
<evidence type="ECO:0007744" key="7">
    <source>
        <dbReference type="PDB" id="7W1E"/>
    </source>
</evidence>